<evidence type="ECO:0000250" key="1"/>
<evidence type="ECO:0000255" key="2"/>
<evidence type="ECO:0000255" key="3">
    <source>
        <dbReference type="PROSITE-ProRule" id="PRU00207"/>
    </source>
</evidence>
<evidence type="ECO:0000305" key="4"/>
<feature type="chain" id="PRO_0000393767" description="TNF receptor-associated factor family protein DDB_G0278133">
    <location>
        <begin position="1"/>
        <end position="477"/>
    </location>
</feature>
<feature type="domain" description="MATH">
    <location>
        <begin position="331"/>
        <end position="463"/>
    </location>
</feature>
<feature type="zinc finger region" description="RING-type; degenerate">
    <location>
        <begin position="45"/>
        <end position="88"/>
    </location>
</feature>
<feature type="zinc finger region" description="TRAF-type 1" evidence="3">
    <location>
        <begin position="160"/>
        <end position="211"/>
    </location>
</feature>
<feature type="zinc finger region" description="TRAF-type 2" evidence="3">
    <location>
        <begin position="212"/>
        <end position="267"/>
    </location>
</feature>
<feature type="coiled-coil region" evidence="2">
    <location>
        <begin position="271"/>
        <end position="326"/>
    </location>
</feature>
<keyword id="KW-0175">Coiled coil</keyword>
<keyword id="KW-0963">Cytoplasm</keyword>
<keyword id="KW-0479">Metal-binding</keyword>
<keyword id="KW-1185">Reference proteome</keyword>
<keyword id="KW-0677">Repeat</keyword>
<keyword id="KW-0862">Zinc</keyword>
<keyword id="KW-0863">Zinc-finger</keyword>
<comment type="function">
    <text evidence="1">Probable adapter protein and signal transducer that links members of the tumor necrosis factor receptor family to different signaling pathways by association with the receptor cytoplasmic domain and kinases.</text>
</comment>
<comment type="subcellular location">
    <subcellularLocation>
        <location evidence="1">Cytoplasm</location>
    </subcellularLocation>
</comment>
<comment type="domain">
    <text>The MATH/TRAF domain binds to receptor cytoplasmic domains.</text>
</comment>
<comment type="similarity">
    <text evidence="4">Belongs to the TNF receptor-associated factor family. A subfamily.</text>
</comment>
<sequence>MLDFINLINNINNPTSPTKITPKVIPIKYEIKDILVDSDEEKYECDICTLELFIESEPKALQCKEGHLACRRCWERYLSTNKQCMTCKTPISSISELSRNRYLEKEYSNWLNDRLVFCPNSNENVFRLNMSGLPAINNSNQTLHQDLCNHGAMKFSELQNHYKACESRILQCNLCLIKFCSKDSDKHQNECSKVYSKCEFCNSNILRSSLSDHHKTHCTKYLIECPHCKIMIKRDTITKHINDDCEEIMITCSEYLCGKRFTRSKMQIHSLEHSVTKLMNQNEIIKKDNQNLDQEKKIEEIKLKLNNLLNNYIQLKNEIAVLKQNSFKEMVYSNKWIIPEYRSFNALYTHKKSKNSNDFQVGSHTFYIKIYPNGQAGKQGKFGVFLERKPRYGILLKYMFSFSLLPPEDSTATKVSLGPIHRVLILLLIDFEESRSLSCGTNVFTDSRKVLKDFLNEKGELEISFSITIQDEKIIPL</sequence>
<gene>
    <name type="ORF">DDB_G0278133</name>
</gene>
<accession>Q54YP8</accession>
<dbReference type="EMBL" id="AAFI02000023">
    <property type="protein sequence ID" value="EAL68239.1"/>
    <property type="molecule type" value="Genomic_DNA"/>
</dbReference>
<dbReference type="RefSeq" id="XP_642154.1">
    <property type="nucleotide sequence ID" value="XM_637062.1"/>
</dbReference>
<dbReference type="STRING" id="44689.Q54YP8"/>
<dbReference type="PaxDb" id="44689-DDB0204449"/>
<dbReference type="EnsemblProtists" id="EAL68239">
    <property type="protein sequence ID" value="EAL68239"/>
    <property type="gene ID" value="DDB_G0278133"/>
</dbReference>
<dbReference type="GeneID" id="8621361"/>
<dbReference type="KEGG" id="ddi:DDB_G0278133"/>
<dbReference type="dictyBase" id="DDB_G0278133"/>
<dbReference type="VEuPathDB" id="AmoebaDB:DDB_G0278133"/>
<dbReference type="eggNOG" id="ENOG502RBHI">
    <property type="taxonomic scope" value="Eukaryota"/>
</dbReference>
<dbReference type="HOGENOM" id="CLU_040980_0_0_1"/>
<dbReference type="InParanoid" id="Q54YP8"/>
<dbReference type="OMA" id="HINDDCE"/>
<dbReference type="PhylomeDB" id="Q54YP8"/>
<dbReference type="PRO" id="PR:Q54YP8"/>
<dbReference type="Proteomes" id="UP000002195">
    <property type="component" value="Chromosome 3"/>
</dbReference>
<dbReference type="GO" id="GO:0005737">
    <property type="term" value="C:cytoplasm"/>
    <property type="evidence" value="ECO:0000318"/>
    <property type="project" value="GO_Central"/>
</dbReference>
<dbReference type="GO" id="GO:0008270">
    <property type="term" value="F:zinc ion binding"/>
    <property type="evidence" value="ECO:0007669"/>
    <property type="project" value="UniProtKB-KW"/>
</dbReference>
<dbReference type="CDD" id="cd00121">
    <property type="entry name" value="MATH"/>
    <property type="match status" value="1"/>
</dbReference>
<dbReference type="Gene3D" id="2.60.210.10">
    <property type="entry name" value="Apoptosis, Tumor Necrosis Factor Receptor Associated Protein 2, Chain A"/>
    <property type="match status" value="1"/>
</dbReference>
<dbReference type="Gene3D" id="3.30.40.10">
    <property type="entry name" value="Zinc/RING finger domain, C3HC4 (zinc finger)"/>
    <property type="match status" value="3"/>
</dbReference>
<dbReference type="InterPro" id="IPR002083">
    <property type="entry name" value="MATH/TRAF_dom"/>
</dbReference>
<dbReference type="InterPro" id="IPR008974">
    <property type="entry name" value="TRAF-like"/>
</dbReference>
<dbReference type="InterPro" id="IPR013083">
    <property type="entry name" value="Znf_RING/FYVE/PHD"/>
</dbReference>
<dbReference type="InterPro" id="IPR001293">
    <property type="entry name" value="Znf_TRAF"/>
</dbReference>
<dbReference type="PANTHER" id="PTHR10131:SF65">
    <property type="entry name" value="RING FINGER PROTEIN DG17-RELATED"/>
    <property type="match status" value="1"/>
</dbReference>
<dbReference type="PANTHER" id="PTHR10131">
    <property type="entry name" value="TNF RECEPTOR ASSOCIATED FACTOR"/>
    <property type="match status" value="1"/>
</dbReference>
<dbReference type="SUPFAM" id="SSF57850">
    <property type="entry name" value="RING/U-box"/>
    <property type="match status" value="1"/>
</dbReference>
<dbReference type="SUPFAM" id="SSF49599">
    <property type="entry name" value="TRAF domain-like"/>
    <property type="match status" value="1"/>
</dbReference>
<dbReference type="PROSITE" id="PS50145">
    <property type="entry name" value="ZF_TRAF"/>
    <property type="match status" value="1"/>
</dbReference>
<protein>
    <recommendedName>
        <fullName>TNF receptor-associated factor family protein DDB_G0278133</fullName>
    </recommendedName>
</protein>
<organism>
    <name type="scientific">Dictyostelium discoideum</name>
    <name type="common">Social amoeba</name>
    <dbReference type="NCBI Taxonomy" id="44689"/>
    <lineage>
        <taxon>Eukaryota</taxon>
        <taxon>Amoebozoa</taxon>
        <taxon>Evosea</taxon>
        <taxon>Eumycetozoa</taxon>
        <taxon>Dictyostelia</taxon>
        <taxon>Dictyosteliales</taxon>
        <taxon>Dictyosteliaceae</taxon>
        <taxon>Dictyostelium</taxon>
    </lineage>
</organism>
<reference key="1">
    <citation type="journal article" date="2005" name="Nature">
        <title>The genome of the social amoeba Dictyostelium discoideum.</title>
        <authorList>
            <person name="Eichinger L."/>
            <person name="Pachebat J.A."/>
            <person name="Gloeckner G."/>
            <person name="Rajandream M.A."/>
            <person name="Sucgang R."/>
            <person name="Berriman M."/>
            <person name="Song J."/>
            <person name="Olsen R."/>
            <person name="Szafranski K."/>
            <person name="Xu Q."/>
            <person name="Tunggal B."/>
            <person name="Kummerfeld S."/>
            <person name="Madera M."/>
            <person name="Konfortov B.A."/>
            <person name="Rivero F."/>
            <person name="Bankier A.T."/>
            <person name="Lehmann R."/>
            <person name="Hamlin N."/>
            <person name="Davies R."/>
            <person name="Gaudet P."/>
            <person name="Fey P."/>
            <person name="Pilcher K."/>
            <person name="Chen G."/>
            <person name="Saunders D."/>
            <person name="Sodergren E.J."/>
            <person name="Davis P."/>
            <person name="Kerhornou A."/>
            <person name="Nie X."/>
            <person name="Hall N."/>
            <person name="Anjard C."/>
            <person name="Hemphill L."/>
            <person name="Bason N."/>
            <person name="Farbrother P."/>
            <person name="Desany B."/>
            <person name="Just E."/>
            <person name="Morio T."/>
            <person name="Rost R."/>
            <person name="Churcher C.M."/>
            <person name="Cooper J."/>
            <person name="Haydock S."/>
            <person name="van Driessche N."/>
            <person name="Cronin A."/>
            <person name="Goodhead I."/>
            <person name="Muzny D.M."/>
            <person name="Mourier T."/>
            <person name="Pain A."/>
            <person name="Lu M."/>
            <person name="Harper D."/>
            <person name="Lindsay R."/>
            <person name="Hauser H."/>
            <person name="James K.D."/>
            <person name="Quiles M."/>
            <person name="Madan Babu M."/>
            <person name="Saito T."/>
            <person name="Buchrieser C."/>
            <person name="Wardroper A."/>
            <person name="Felder M."/>
            <person name="Thangavelu M."/>
            <person name="Johnson D."/>
            <person name="Knights A."/>
            <person name="Loulseged H."/>
            <person name="Mungall K.L."/>
            <person name="Oliver K."/>
            <person name="Price C."/>
            <person name="Quail M.A."/>
            <person name="Urushihara H."/>
            <person name="Hernandez J."/>
            <person name="Rabbinowitsch E."/>
            <person name="Steffen D."/>
            <person name="Sanders M."/>
            <person name="Ma J."/>
            <person name="Kohara Y."/>
            <person name="Sharp S."/>
            <person name="Simmonds M.N."/>
            <person name="Spiegler S."/>
            <person name="Tivey A."/>
            <person name="Sugano S."/>
            <person name="White B."/>
            <person name="Walker D."/>
            <person name="Woodward J.R."/>
            <person name="Winckler T."/>
            <person name="Tanaka Y."/>
            <person name="Shaulsky G."/>
            <person name="Schleicher M."/>
            <person name="Weinstock G.M."/>
            <person name="Rosenthal A."/>
            <person name="Cox E.C."/>
            <person name="Chisholm R.L."/>
            <person name="Gibbs R.A."/>
            <person name="Loomis W.F."/>
            <person name="Platzer M."/>
            <person name="Kay R.R."/>
            <person name="Williams J.G."/>
            <person name="Dear P.H."/>
            <person name="Noegel A.A."/>
            <person name="Barrell B.G."/>
            <person name="Kuspa A."/>
        </authorList>
    </citation>
    <scope>NUCLEOTIDE SEQUENCE [LARGE SCALE GENOMIC DNA]</scope>
    <source>
        <strain>AX4</strain>
    </source>
</reference>
<name>Y7813_DICDI</name>
<proteinExistence type="inferred from homology"/>